<comment type="subunit">
    <text evidence="1">Part of the 50S ribosomal subunit. Contacts protein L32.</text>
</comment>
<comment type="similarity">
    <text evidence="1">Belongs to the bacterial ribosomal protein bL17 family.</text>
</comment>
<accession>Q2NIY2</accession>
<feature type="chain" id="PRO_1000087157" description="Large ribosomal subunit protein bL17">
    <location>
        <begin position="1"/>
        <end position="118"/>
    </location>
</feature>
<proteinExistence type="inferred from homology"/>
<evidence type="ECO:0000255" key="1">
    <source>
        <dbReference type="HAMAP-Rule" id="MF_01368"/>
    </source>
</evidence>
<evidence type="ECO:0000305" key="2"/>
<organism>
    <name type="scientific">Aster yellows witches'-broom phytoplasma (strain AYWB)</name>
    <dbReference type="NCBI Taxonomy" id="322098"/>
    <lineage>
        <taxon>Bacteria</taxon>
        <taxon>Bacillati</taxon>
        <taxon>Mycoplasmatota</taxon>
        <taxon>Mollicutes</taxon>
        <taxon>Acholeplasmatales</taxon>
        <taxon>Acholeplasmataceae</taxon>
        <taxon>Candidatus Phytoplasma</taxon>
        <taxon>16SrI (Aster yellows group)</taxon>
    </lineage>
</organism>
<gene>
    <name evidence="1" type="primary">rplQ</name>
    <name type="ordered locus">AYWB_494</name>
</gene>
<sequence length="118" mass="13648">MPFSKLGRNKSQRRALLRTLMTDLIVQEKIMTTESKAKELQKLADKMVTLSKKNTLHTRRQAKRHLFDEKINDDTTVLQKLFKNISSKYLDRQGGYTRVIKTVPRRGDSAPMAIIAFV</sequence>
<keyword id="KW-0687">Ribonucleoprotein</keyword>
<keyword id="KW-0689">Ribosomal protein</keyword>
<dbReference type="EMBL" id="CP000061">
    <property type="protein sequence ID" value="ABC65611.1"/>
    <property type="molecule type" value="Genomic_DNA"/>
</dbReference>
<dbReference type="RefSeq" id="WP_011412774.1">
    <property type="nucleotide sequence ID" value="NC_007716.1"/>
</dbReference>
<dbReference type="SMR" id="Q2NIY2"/>
<dbReference type="STRING" id="322098.AYWB_494"/>
<dbReference type="KEGG" id="ayw:AYWB_494"/>
<dbReference type="eggNOG" id="COG0203">
    <property type="taxonomic scope" value="Bacteria"/>
</dbReference>
<dbReference type="HOGENOM" id="CLU_074407_2_2_14"/>
<dbReference type="OrthoDB" id="9809073at2"/>
<dbReference type="PhylomeDB" id="Q2NIY2"/>
<dbReference type="Proteomes" id="UP000001934">
    <property type="component" value="Chromosome"/>
</dbReference>
<dbReference type="GO" id="GO:0015934">
    <property type="term" value="C:large ribosomal subunit"/>
    <property type="evidence" value="ECO:0007669"/>
    <property type="project" value="TreeGrafter"/>
</dbReference>
<dbReference type="GO" id="GO:0003735">
    <property type="term" value="F:structural constituent of ribosome"/>
    <property type="evidence" value="ECO:0007669"/>
    <property type="project" value="InterPro"/>
</dbReference>
<dbReference type="GO" id="GO:0006412">
    <property type="term" value="P:translation"/>
    <property type="evidence" value="ECO:0007669"/>
    <property type="project" value="UniProtKB-UniRule"/>
</dbReference>
<dbReference type="Gene3D" id="3.90.1030.10">
    <property type="entry name" value="Ribosomal protein L17"/>
    <property type="match status" value="1"/>
</dbReference>
<dbReference type="HAMAP" id="MF_01368">
    <property type="entry name" value="Ribosomal_bL17"/>
    <property type="match status" value="1"/>
</dbReference>
<dbReference type="InterPro" id="IPR000456">
    <property type="entry name" value="Ribosomal_bL17"/>
</dbReference>
<dbReference type="InterPro" id="IPR047859">
    <property type="entry name" value="Ribosomal_bL17_CS"/>
</dbReference>
<dbReference type="InterPro" id="IPR036373">
    <property type="entry name" value="Ribosomal_bL17_sf"/>
</dbReference>
<dbReference type="NCBIfam" id="TIGR00059">
    <property type="entry name" value="L17"/>
    <property type="match status" value="1"/>
</dbReference>
<dbReference type="PANTHER" id="PTHR14413:SF16">
    <property type="entry name" value="LARGE RIBOSOMAL SUBUNIT PROTEIN BL17M"/>
    <property type="match status" value="1"/>
</dbReference>
<dbReference type="PANTHER" id="PTHR14413">
    <property type="entry name" value="RIBOSOMAL PROTEIN L17"/>
    <property type="match status" value="1"/>
</dbReference>
<dbReference type="Pfam" id="PF01196">
    <property type="entry name" value="Ribosomal_L17"/>
    <property type="match status" value="1"/>
</dbReference>
<dbReference type="SUPFAM" id="SSF64263">
    <property type="entry name" value="Prokaryotic ribosomal protein L17"/>
    <property type="match status" value="1"/>
</dbReference>
<dbReference type="PROSITE" id="PS01167">
    <property type="entry name" value="RIBOSOMAL_L17"/>
    <property type="match status" value="1"/>
</dbReference>
<reference key="1">
    <citation type="journal article" date="2006" name="J. Bacteriol.">
        <title>Living with genome instability: the adaptation of phytoplasmas to diverse environments of their insect and plant hosts.</title>
        <authorList>
            <person name="Bai X."/>
            <person name="Zhang J."/>
            <person name="Ewing A."/>
            <person name="Miller S.A."/>
            <person name="Jancso Radek A."/>
            <person name="Shevchenko D.V."/>
            <person name="Tsukerman K."/>
            <person name="Walunas T."/>
            <person name="Lapidus A."/>
            <person name="Campbell J.W."/>
            <person name="Hogenhout S.A."/>
        </authorList>
    </citation>
    <scope>NUCLEOTIDE SEQUENCE [LARGE SCALE GENOMIC DNA]</scope>
    <source>
        <strain>AYWB</strain>
    </source>
</reference>
<name>RL17_AYWBP</name>
<protein>
    <recommendedName>
        <fullName evidence="1">Large ribosomal subunit protein bL17</fullName>
    </recommendedName>
    <alternativeName>
        <fullName evidence="2">50S ribosomal protein L17</fullName>
    </alternativeName>
</protein>